<proteinExistence type="inferred from homology"/>
<gene>
    <name type="ordered locus">SAUSA300_1848</name>
</gene>
<comment type="function">
    <text evidence="1">Has nucleoside phosphatase activity towards nucleoside triphosphates and nucleoside diphosphates.</text>
</comment>
<comment type="catalytic activity">
    <reaction evidence="1">
        <text>a ribonucleoside 5'-triphosphate + H2O = a ribonucleoside 5'-diphosphate + phosphate + H(+)</text>
        <dbReference type="Rhea" id="RHEA:23680"/>
        <dbReference type="ChEBI" id="CHEBI:15377"/>
        <dbReference type="ChEBI" id="CHEBI:15378"/>
        <dbReference type="ChEBI" id="CHEBI:43474"/>
        <dbReference type="ChEBI" id="CHEBI:57930"/>
        <dbReference type="ChEBI" id="CHEBI:61557"/>
        <dbReference type="EC" id="3.6.1.15"/>
    </reaction>
</comment>
<comment type="catalytic activity">
    <reaction evidence="1">
        <text>a ribonucleoside 5'-diphosphate + H2O = a ribonucleoside 5'-phosphate + phosphate + H(+)</text>
        <dbReference type="Rhea" id="RHEA:36799"/>
        <dbReference type="ChEBI" id="CHEBI:15377"/>
        <dbReference type="ChEBI" id="CHEBI:15378"/>
        <dbReference type="ChEBI" id="CHEBI:43474"/>
        <dbReference type="ChEBI" id="CHEBI:57930"/>
        <dbReference type="ChEBI" id="CHEBI:58043"/>
        <dbReference type="EC" id="3.6.1.6"/>
    </reaction>
</comment>
<comment type="cofactor">
    <cofactor evidence="1">
        <name>Mg(2+)</name>
        <dbReference type="ChEBI" id="CHEBI:18420"/>
    </cofactor>
</comment>
<comment type="similarity">
    <text evidence="1">Belongs to the Ntdp family.</text>
</comment>
<name>NTDP_STAA3</name>
<protein>
    <recommendedName>
        <fullName evidence="1">Nucleoside triphosphate/diphosphate phosphatase</fullName>
        <ecNumber evidence="1">3.6.1.15</ecNumber>
        <ecNumber evidence="1">3.6.1.6</ecNumber>
    </recommendedName>
</protein>
<organism>
    <name type="scientific">Staphylococcus aureus (strain USA300)</name>
    <dbReference type="NCBI Taxonomy" id="367830"/>
    <lineage>
        <taxon>Bacteria</taxon>
        <taxon>Bacillati</taxon>
        <taxon>Bacillota</taxon>
        <taxon>Bacilli</taxon>
        <taxon>Bacillales</taxon>
        <taxon>Staphylococcaceae</taxon>
        <taxon>Staphylococcus</taxon>
    </lineage>
</organism>
<dbReference type="EC" id="3.6.1.15" evidence="1"/>
<dbReference type="EC" id="3.6.1.6" evidence="1"/>
<dbReference type="EMBL" id="CP000255">
    <property type="protein sequence ID" value="ABD20596.1"/>
    <property type="molecule type" value="Genomic_DNA"/>
</dbReference>
<dbReference type="RefSeq" id="WP_000251253.1">
    <property type="nucleotide sequence ID" value="NZ_CP027476.1"/>
</dbReference>
<dbReference type="SMR" id="Q2FFM8"/>
<dbReference type="KEGG" id="saa:SAUSA300_1848"/>
<dbReference type="HOGENOM" id="CLU_109787_1_0_9"/>
<dbReference type="OMA" id="QSYKHNG"/>
<dbReference type="Proteomes" id="UP000001939">
    <property type="component" value="Chromosome"/>
</dbReference>
<dbReference type="GO" id="GO:0000287">
    <property type="term" value="F:magnesium ion binding"/>
    <property type="evidence" value="ECO:0007669"/>
    <property type="project" value="UniProtKB-UniRule"/>
</dbReference>
<dbReference type="GO" id="GO:0017110">
    <property type="term" value="F:nucleoside diphosphate phosphatase activity"/>
    <property type="evidence" value="ECO:0007669"/>
    <property type="project" value="UniProtKB-UniRule"/>
</dbReference>
<dbReference type="GO" id="GO:0017111">
    <property type="term" value="F:ribonucleoside triphosphate phosphatase activity"/>
    <property type="evidence" value="ECO:0007669"/>
    <property type="project" value="UniProtKB-UniRule"/>
</dbReference>
<dbReference type="Gene3D" id="2.40.380.10">
    <property type="entry name" value="FomD-like"/>
    <property type="match status" value="1"/>
</dbReference>
<dbReference type="HAMAP" id="MF_01568">
    <property type="entry name" value="Ntdp"/>
    <property type="match status" value="1"/>
</dbReference>
<dbReference type="InterPro" id="IPR007295">
    <property type="entry name" value="DUF402"/>
</dbReference>
<dbReference type="InterPro" id="IPR035930">
    <property type="entry name" value="FomD-like_sf"/>
</dbReference>
<dbReference type="InterPro" id="IPR050212">
    <property type="entry name" value="Ntdp-like"/>
</dbReference>
<dbReference type="InterPro" id="IPR016882">
    <property type="entry name" value="SA1684"/>
</dbReference>
<dbReference type="NCBIfam" id="NF010183">
    <property type="entry name" value="PRK13662.1"/>
    <property type="match status" value="1"/>
</dbReference>
<dbReference type="PANTHER" id="PTHR39159">
    <property type="match status" value="1"/>
</dbReference>
<dbReference type="PANTHER" id="PTHR39159:SF1">
    <property type="entry name" value="UPF0374 PROTEIN YGAC"/>
    <property type="match status" value="1"/>
</dbReference>
<dbReference type="Pfam" id="PF04167">
    <property type="entry name" value="DUF402"/>
    <property type="match status" value="1"/>
</dbReference>
<dbReference type="PIRSF" id="PIRSF028345">
    <property type="entry name" value="UCP028345"/>
    <property type="match status" value="1"/>
</dbReference>
<dbReference type="SUPFAM" id="SSF159234">
    <property type="entry name" value="FomD-like"/>
    <property type="match status" value="1"/>
</dbReference>
<evidence type="ECO:0000255" key="1">
    <source>
        <dbReference type="HAMAP-Rule" id="MF_01568"/>
    </source>
</evidence>
<accession>Q2FFM8</accession>
<feature type="chain" id="PRO_0000248104" description="Nucleoside triphosphate/diphosphate phosphatase">
    <location>
        <begin position="1"/>
        <end position="180"/>
    </location>
</feature>
<feature type="active site" description="Proton donor" evidence="1">
    <location>
        <position position="26"/>
    </location>
</feature>
<feature type="binding site" evidence="1">
    <location>
        <position position="90"/>
    </location>
    <ligand>
        <name>Mg(2+)</name>
        <dbReference type="ChEBI" id="CHEBI:18420"/>
        <label>1</label>
    </ligand>
</feature>
<feature type="binding site" evidence="1">
    <location>
        <position position="106"/>
    </location>
    <ligand>
        <name>Mg(2+)</name>
        <dbReference type="ChEBI" id="CHEBI:18420"/>
        <label>1</label>
    </ligand>
</feature>
<feature type="binding site" evidence="1">
    <location>
        <position position="108"/>
    </location>
    <ligand>
        <name>Mg(2+)</name>
        <dbReference type="ChEBI" id="CHEBI:18420"/>
        <label>2</label>
    </ligand>
</feature>
<feature type="binding site" evidence="1">
    <location>
        <position position="110"/>
    </location>
    <ligand>
        <name>Mg(2+)</name>
        <dbReference type="ChEBI" id="CHEBI:18420"/>
        <label>1</label>
    </ligand>
</feature>
<feature type="binding site" evidence="1">
    <location>
        <position position="110"/>
    </location>
    <ligand>
        <name>Mg(2+)</name>
        <dbReference type="ChEBI" id="CHEBI:18420"/>
        <label>2</label>
    </ligand>
</feature>
<feature type="binding site" evidence="1">
    <location>
        <position position="123"/>
    </location>
    <ligand>
        <name>Mg(2+)</name>
        <dbReference type="ChEBI" id="CHEBI:18420"/>
        <label>2</label>
    </ligand>
</feature>
<feature type="binding site" evidence="1">
    <location>
        <position position="126"/>
    </location>
    <ligand>
        <name>Mg(2+)</name>
        <dbReference type="ChEBI" id="CHEBI:18420"/>
        <label>2</label>
    </ligand>
</feature>
<keyword id="KW-0378">Hydrolase</keyword>
<keyword id="KW-0460">Magnesium</keyword>
<keyword id="KW-0479">Metal-binding</keyword>
<reference key="1">
    <citation type="journal article" date="2006" name="Lancet">
        <title>Complete genome sequence of USA300, an epidemic clone of community-acquired meticillin-resistant Staphylococcus aureus.</title>
        <authorList>
            <person name="Diep B.A."/>
            <person name="Gill S.R."/>
            <person name="Chang R.F."/>
            <person name="Phan T.H."/>
            <person name="Chen J.H."/>
            <person name="Davidson M.G."/>
            <person name="Lin F."/>
            <person name="Lin J."/>
            <person name="Carleton H.A."/>
            <person name="Mongodin E.F."/>
            <person name="Sensabaugh G.F."/>
            <person name="Perdreau-Remington F."/>
        </authorList>
    </citation>
    <scope>NUCLEOTIDE SEQUENCE [LARGE SCALE GENOMIC DNA]</scope>
    <source>
        <strain>USA300</strain>
    </source>
</reference>
<sequence length="180" mass="21704">MVRESIPKEGENIKIQSYKHDGKIHRVWSETTILKGTDHVVIGGNDHTLVTESDGRTWITREPAIVYFHSEYWFNVICMFREDGIYYYCNLSSPFVCDEEALKYIDYDLDIKVYPNGKYHLLDEDEYEQHMNQMNYPHDIDIILRRNVDILQQWIEQKKGPFAPDFIKVWKERYKKIRQY</sequence>